<dbReference type="EC" id="2.4.2.18" evidence="1"/>
<dbReference type="EMBL" id="CP000100">
    <property type="protein sequence ID" value="ABB58153.1"/>
    <property type="molecule type" value="Genomic_DNA"/>
</dbReference>
<dbReference type="RefSeq" id="WP_011378328.1">
    <property type="nucleotide sequence ID" value="NZ_JACJTX010000001.1"/>
</dbReference>
<dbReference type="SMR" id="Q31LB6"/>
<dbReference type="STRING" id="1140.Synpcc7942_2123"/>
<dbReference type="PaxDb" id="1140-Synpcc7942_2123"/>
<dbReference type="GeneID" id="72431000"/>
<dbReference type="KEGG" id="syf:Synpcc7942_2123"/>
<dbReference type="eggNOG" id="COG0547">
    <property type="taxonomic scope" value="Bacteria"/>
</dbReference>
<dbReference type="HOGENOM" id="CLU_034315_2_1_3"/>
<dbReference type="OrthoDB" id="9806430at2"/>
<dbReference type="BioCyc" id="SYNEL:SYNPCC7942_2123-MONOMER"/>
<dbReference type="UniPathway" id="UPA00035">
    <property type="reaction ID" value="UER00041"/>
</dbReference>
<dbReference type="Proteomes" id="UP000889800">
    <property type="component" value="Chromosome"/>
</dbReference>
<dbReference type="GO" id="GO:0005829">
    <property type="term" value="C:cytosol"/>
    <property type="evidence" value="ECO:0007669"/>
    <property type="project" value="TreeGrafter"/>
</dbReference>
<dbReference type="GO" id="GO:0004048">
    <property type="term" value="F:anthranilate phosphoribosyltransferase activity"/>
    <property type="evidence" value="ECO:0007669"/>
    <property type="project" value="UniProtKB-UniRule"/>
</dbReference>
<dbReference type="GO" id="GO:0000287">
    <property type="term" value="F:magnesium ion binding"/>
    <property type="evidence" value="ECO:0007669"/>
    <property type="project" value="UniProtKB-UniRule"/>
</dbReference>
<dbReference type="GO" id="GO:0000162">
    <property type="term" value="P:L-tryptophan biosynthetic process"/>
    <property type="evidence" value="ECO:0007669"/>
    <property type="project" value="UniProtKB-UniRule"/>
</dbReference>
<dbReference type="FunFam" id="3.40.1030.10:FF:000002">
    <property type="entry name" value="Anthranilate phosphoribosyltransferase"/>
    <property type="match status" value="1"/>
</dbReference>
<dbReference type="Gene3D" id="3.40.1030.10">
    <property type="entry name" value="Nucleoside phosphorylase/phosphoribosyltransferase catalytic domain"/>
    <property type="match status" value="1"/>
</dbReference>
<dbReference type="Gene3D" id="1.20.970.10">
    <property type="entry name" value="Transferase, Pyrimidine Nucleoside Phosphorylase, Chain C"/>
    <property type="match status" value="1"/>
</dbReference>
<dbReference type="HAMAP" id="MF_00211">
    <property type="entry name" value="TrpD"/>
    <property type="match status" value="1"/>
</dbReference>
<dbReference type="InterPro" id="IPR005940">
    <property type="entry name" value="Anthranilate_Pribosyl_Tfrase"/>
</dbReference>
<dbReference type="InterPro" id="IPR000312">
    <property type="entry name" value="Glycosyl_Trfase_fam3"/>
</dbReference>
<dbReference type="InterPro" id="IPR017459">
    <property type="entry name" value="Glycosyl_Trfase_fam3_N_dom"/>
</dbReference>
<dbReference type="InterPro" id="IPR036320">
    <property type="entry name" value="Glycosyl_Trfase_fam3_N_dom_sf"/>
</dbReference>
<dbReference type="InterPro" id="IPR035902">
    <property type="entry name" value="Nuc_phospho_transferase"/>
</dbReference>
<dbReference type="NCBIfam" id="TIGR01245">
    <property type="entry name" value="trpD"/>
    <property type="match status" value="1"/>
</dbReference>
<dbReference type="PANTHER" id="PTHR43285">
    <property type="entry name" value="ANTHRANILATE PHOSPHORIBOSYLTRANSFERASE"/>
    <property type="match status" value="1"/>
</dbReference>
<dbReference type="PANTHER" id="PTHR43285:SF2">
    <property type="entry name" value="ANTHRANILATE PHOSPHORIBOSYLTRANSFERASE"/>
    <property type="match status" value="1"/>
</dbReference>
<dbReference type="Pfam" id="PF02885">
    <property type="entry name" value="Glycos_trans_3N"/>
    <property type="match status" value="1"/>
</dbReference>
<dbReference type="Pfam" id="PF00591">
    <property type="entry name" value="Glycos_transf_3"/>
    <property type="match status" value="1"/>
</dbReference>
<dbReference type="SUPFAM" id="SSF52418">
    <property type="entry name" value="Nucleoside phosphorylase/phosphoribosyltransferase catalytic domain"/>
    <property type="match status" value="1"/>
</dbReference>
<dbReference type="SUPFAM" id="SSF47648">
    <property type="entry name" value="Nucleoside phosphorylase/phosphoribosyltransferase N-terminal domain"/>
    <property type="match status" value="1"/>
</dbReference>
<organism>
    <name type="scientific">Synechococcus elongatus (strain ATCC 33912 / PCC 7942 / FACHB-805)</name>
    <name type="common">Anacystis nidulans R2</name>
    <dbReference type="NCBI Taxonomy" id="1140"/>
    <lineage>
        <taxon>Bacteria</taxon>
        <taxon>Bacillati</taxon>
        <taxon>Cyanobacteriota</taxon>
        <taxon>Cyanophyceae</taxon>
        <taxon>Synechococcales</taxon>
        <taxon>Synechococcaceae</taxon>
        <taxon>Synechococcus</taxon>
    </lineage>
</organism>
<feature type="chain" id="PRO_1000043076" description="Anthranilate phosphoribosyltransferase">
    <location>
        <begin position="1"/>
        <end position="348"/>
    </location>
</feature>
<feature type="binding site" evidence="1">
    <location>
        <position position="91"/>
    </location>
    <ligand>
        <name>5-phospho-alpha-D-ribose 1-diphosphate</name>
        <dbReference type="ChEBI" id="CHEBI:58017"/>
    </ligand>
</feature>
<feature type="binding site" evidence="1">
    <location>
        <position position="91"/>
    </location>
    <ligand>
        <name>anthranilate</name>
        <dbReference type="ChEBI" id="CHEBI:16567"/>
        <label>1</label>
    </ligand>
</feature>
<feature type="binding site" evidence="1">
    <location>
        <begin position="94"/>
        <end position="95"/>
    </location>
    <ligand>
        <name>5-phospho-alpha-D-ribose 1-diphosphate</name>
        <dbReference type="ChEBI" id="CHEBI:58017"/>
    </ligand>
</feature>
<feature type="binding site" evidence="1">
    <location>
        <position position="99"/>
    </location>
    <ligand>
        <name>5-phospho-alpha-D-ribose 1-diphosphate</name>
        <dbReference type="ChEBI" id="CHEBI:58017"/>
    </ligand>
</feature>
<feature type="binding site" evidence="1">
    <location>
        <begin position="101"/>
        <end position="104"/>
    </location>
    <ligand>
        <name>5-phospho-alpha-D-ribose 1-diphosphate</name>
        <dbReference type="ChEBI" id="CHEBI:58017"/>
    </ligand>
</feature>
<feature type="binding site" evidence="1">
    <location>
        <position position="103"/>
    </location>
    <ligand>
        <name>Mg(2+)</name>
        <dbReference type="ChEBI" id="CHEBI:18420"/>
        <label>1</label>
    </ligand>
</feature>
<feature type="binding site" evidence="1">
    <location>
        <begin position="119"/>
        <end position="127"/>
    </location>
    <ligand>
        <name>5-phospho-alpha-D-ribose 1-diphosphate</name>
        <dbReference type="ChEBI" id="CHEBI:58017"/>
    </ligand>
</feature>
<feature type="binding site" evidence="1">
    <location>
        <position position="122"/>
    </location>
    <ligand>
        <name>anthranilate</name>
        <dbReference type="ChEBI" id="CHEBI:16567"/>
        <label>1</label>
    </ligand>
</feature>
<feature type="binding site" evidence="1">
    <location>
        <position position="131"/>
    </location>
    <ligand>
        <name>5-phospho-alpha-D-ribose 1-diphosphate</name>
        <dbReference type="ChEBI" id="CHEBI:58017"/>
    </ligand>
</feature>
<feature type="binding site" evidence="1">
    <location>
        <position position="177"/>
    </location>
    <ligand>
        <name>anthranilate</name>
        <dbReference type="ChEBI" id="CHEBI:16567"/>
        <label>2</label>
    </ligand>
</feature>
<feature type="binding site" evidence="1">
    <location>
        <position position="236"/>
    </location>
    <ligand>
        <name>Mg(2+)</name>
        <dbReference type="ChEBI" id="CHEBI:18420"/>
        <label>2</label>
    </ligand>
</feature>
<feature type="binding site" evidence="1">
    <location>
        <position position="237"/>
    </location>
    <ligand>
        <name>Mg(2+)</name>
        <dbReference type="ChEBI" id="CHEBI:18420"/>
        <label>1</label>
    </ligand>
</feature>
<feature type="binding site" evidence="1">
    <location>
        <position position="237"/>
    </location>
    <ligand>
        <name>Mg(2+)</name>
        <dbReference type="ChEBI" id="CHEBI:18420"/>
        <label>2</label>
    </ligand>
</feature>
<accession>Q31LB6</accession>
<reference key="1">
    <citation type="submission" date="2005-08" db="EMBL/GenBank/DDBJ databases">
        <title>Complete sequence of chromosome 1 of Synechococcus elongatus PCC 7942.</title>
        <authorList>
            <consortium name="US DOE Joint Genome Institute"/>
            <person name="Copeland A."/>
            <person name="Lucas S."/>
            <person name="Lapidus A."/>
            <person name="Barry K."/>
            <person name="Detter J.C."/>
            <person name="Glavina T."/>
            <person name="Hammon N."/>
            <person name="Israni S."/>
            <person name="Pitluck S."/>
            <person name="Schmutz J."/>
            <person name="Larimer F."/>
            <person name="Land M."/>
            <person name="Kyrpides N."/>
            <person name="Lykidis A."/>
            <person name="Golden S."/>
            <person name="Richardson P."/>
        </authorList>
    </citation>
    <scope>NUCLEOTIDE SEQUENCE [LARGE SCALE GENOMIC DNA]</scope>
    <source>
        <strain>ATCC 33912 / PCC 7942 / FACHB-805</strain>
    </source>
</reference>
<protein>
    <recommendedName>
        <fullName evidence="1">Anthranilate phosphoribosyltransferase</fullName>
        <ecNumber evidence="1">2.4.2.18</ecNumber>
    </recommendedName>
</protein>
<evidence type="ECO:0000255" key="1">
    <source>
        <dbReference type="HAMAP-Rule" id="MF_00211"/>
    </source>
</evidence>
<keyword id="KW-0028">Amino-acid biosynthesis</keyword>
<keyword id="KW-0057">Aromatic amino acid biosynthesis</keyword>
<keyword id="KW-0328">Glycosyltransferase</keyword>
<keyword id="KW-0460">Magnesium</keyword>
<keyword id="KW-0479">Metal-binding</keyword>
<keyword id="KW-1185">Reference proteome</keyword>
<keyword id="KW-0808">Transferase</keyword>
<keyword id="KW-0822">Tryptophan biosynthesis</keyword>
<comment type="function">
    <text evidence="1">Catalyzes the transfer of the phosphoribosyl group of 5-phosphorylribose-1-pyrophosphate (PRPP) to anthranilate to yield N-(5'-phosphoribosyl)-anthranilate (PRA).</text>
</comment>
<comment type="catalytic activity">
    <reaction evidence="1">
        <text>N-(5-phospho-beta-D-ribosyl)anthranilate + diphosphate = 5-phospho-alpha-D-ribose 1-diphosphate + anthranilate</text>
        <dbReference type="Rhea" id="RHEA:11768"/>
        <dbReference type="ChEBI" id="CHEBI:16567"/>
        <dbReference type="ChEBI" id="CHEBI:18277"/>
        <dbReference type="ChEBI" id="CHEBI:33019"/>
        <dbReference type="ChEBI" id="CHEBI:58017"/>
        <dbReference type="EC" id="2.4.2.18"/>
    </reaction>
</comment>
<comment type="cofactor">
    <cofactor evidence="1">
        <name>Mg(2+)</name>
        <dbReference type="ChEBI" id="CHEBI:18420"/>
    </cofactor>
    <text evidence="1">Binds 2 magnesium ions per monomer.</text>
</comment>
<comment type="pathway">
    <text evidence="1">Amino-acid biosynthesis; L-tryptophan biosynthesis; L-tryptophan from chorismate: step 2/5.</text>
</comment>
<comment type="subunit">
    <text evidence="1">Homodimer.</text>
</comment>
<comment type="similarity">
    <text evidence="1">Belongs to the anthranilate phosphoribosyltransferase family.</text>
</comment>
<name>TRPD_SYNE7</name>
<sequence length="348" mass="35998">MLVAPPAFAEAQVLLQRLLNHESLGAVQARALMEQWLSGTLPEALSGALLAALQSKGVSAQELAAMAQVLQEQAVAVEASDRREPLVDTCGTGGDGAETFNISTAVAFVTAAAGVKVAKHGNRSASGRVGSADVLEALGLNLTAPSDRIHAAVDEVGITFLFAPGWHPAMKAVAPLRKILGVRTVFNLLGPLVNPLRPTGQVIGVYNPGLLPTISGALAELGVRRAIVLHGREGLDEGGLADCTDLAIVREGQLSQQVVDPRDLGLTQAPTVALKGGSVEENADILKAVLQGKGTRAQQDAVLLNAALALEVGEQVDRLDQGISLARSVLASGAAWQKLTQLAAFLQS</sequence>
<gene>
    <name evidence="1" type="primary">trpD</name>
    <name type="ordered locus">Synpcc7942_2123</name>
</gene>
<proteinExistence type="inferred from homology"/>